<gene>
    <name evidence="1" type="primary">psbM</name>
</gene>
<geneLocation type="chloroplast"/>
<keyword id="KW-0150">Chloroplast</keyword>
<keyword id="KW-0472">Membrane</keyword>
<keyword id="KW-0602">Photosynthesis</keyword>
<keyword id="KW-0604">Photosystem II</keyword>
<keyword id="KW-0934">Plastid</keyword>
<keyword id="KW-0674">Reaction center</keyword>
<keyword id="KW-0793">Thylakoid</keyword>
<keyword id="KW-0812">Transmembrane</keyword>
<keyword id="KW-1133">Transmembrane helix</keyword>
<accession>A1E9H9</accession>
<feature type="chain" id="PRO_0000325735" description="Photosystem II reaction center protein M">
    <location>
        <begin position="1"/>
        <end position="34"/>
    </location>
</feature>
<feature type="transmembrane region" description="Helical" evidence="1">
    <location>
        <begin position="5"/>
        <end position="25"/>
    </location>
</feature>
<comment type="function">
    <text evidence="1">One of the components of the core complex of photosystem II (PSII). PSII is a light-driven water:plastoquinone oxidoreductase that uses light energy to abstract electrons from H(2)O, generating O(2) and a proton gradient subsequently used for ATP formation. It consists of a core antenna complex that captures photons, and an electron transfer chain that converts photonic excitation into a charge separation. This subunit is found at the monomer-monomer interface.</text>
</comment>
<comment type="subunit">
    <text evidence="1 2">PSII is composed of 1 copy each of membrane proteins PsbA, PsbB, PsbC, PsbD, PsbE, PsbF, PsbH, PsbI, PsbJ, PsbK, PsbL, PsbM, PsbT, PsbX, PsbY, PsbZ, Psb30/Ycf12, at least 3 peripheral proteins of the oxygen-evolving complex and a large number of cofactors. It forms dimeric complexes (By similarity). Detected in both etioplasts and green leaves; PSII is only assembled in green leaves (PubMed:19137553).</text>
</comment>
<comment type="subcellular location">
    <subcellularLocation>
        <location evidence="1 3">Plastid</location>
        <location evidence="1 3">Chloroplast thylakoid membrane</location>
        <topology evidence="1 3">Single-pass membrane protein</topology>
    </subcellularLocation>
</comment>
<comment type="similarity">
    <text evidence="1">Belongs to the PsbM family.</text>
</comment>
<evidence type="ECO:0000255" key="1">
    <source>
        <dbReference type="HAMAP-Rule" id="MF_00438"/>
    </source>
</evidence>
<evidence type="ECO:0000269" key="2">
    <source>
    </source>
</evidence>
<evidence type="ECO:0000305" key="3">
    <source>
    </source>
</evidence>
<reference key="1">
    <citation type="journal article" date="2007" name="Theor. Appl. Genet.">
        <title>Complete chloroplast genome sequences of Hordeum vulgare, Sorghum bicolor and Agrostis stolonifera, and comparative analyses with other grass genomes.</title>
        <authorList>
            <person name="Saski C."/>
            <person name="Lee S.-B."/>
            <person name="Fjellheim S."/>
            <person name="Guda C."/>
            <person name="Jansen R.K."/>
            <person name="Luo H."/>
            <person name="Tomkins J."/>
            <person name="Rognli O.A."/>
            <person name="Daniell H."/>
            <person name="Clarke J.L."/>
        </authorList>
    </citation>
    <scope>NUCLEOTIDE SEQUENCE [LARGE SCALE GENOMIC DNA]</scope>
    <source>
        <strain>cv. Morex</strain>
    </source>
</reference>
<reference key="2">
    <citation type="journal article" date="2009" name="Proteomics">
        <title>Mass spectrometric characterization of membrane integral low molecular weight proteins from photosystem II in barley etioplasts.</title>
        <authorList>
            <person name="Ploescher M."/>
            <person name="Granvogl B."/>
            <person name="Zoryan M."/>
            <person name="Reisinger V."/>
            <person name="Eichacker L.A."/>
        </authorList>
    </citation>
    <scope>IDENTIFICATION BY MASS SPECTROMETRY</scope>
    <scope>SUBUNIT</scope>
    <scope>SUBCELLULAR LOCATION</scope>
    <source>
        <strain>cv. Steffi</strain>
    </source>
</reference>
<organism>
    <name type="scientific">Hordeum vulgare</name>
    <name type="common">Barley</name>
    <dbReference type="NCBI Taxonomy" id="4513"/>
    <lineage>
        <taxon>Eukaryota</taxon>
        <taxon>Viridiplantae</taxon>
        <taxon>Streptophyta</taxon>
        <taxon>Embryophyta</taxon>
        <taxon>Tracheophyta</taxon>
        <taxon>Spermatophyta</taxon>
        <taxon>Magnoliopsida</taxon>
        <taxon>Liliopsida</taxon>
        <taxon>Poales</taxon>
        <taxon>Poaceae</taxon>
        <taxon>BOP clade</taxon>
        <taxon>Pooideae</taxon>
        <taxon>Triticodae</taxon>
        <taxon>Triticeae</taxon>
        <taxon>Hordeinae</taxon>
        <taxon>Hordeum</taxon>
    </lineage>
</organism>
<dbReference type="EMBL" id="EF115541">
    <property type="protein sequence ID" value="ABK79401.1"/>
    <property type="molecule type" value="Genomic_DNA"/>
</dbReference>
<dbReference type="RefSeq" id="YP_010144413.1">
    <property type="nucleotide sequence ID" value="NC_056985.1"/>
</dbReference>
<dbReference type="RefSeq" id="YP_874641.1">
    <property type="nucleotide sequence ID" value="NC_008590.1"/>
</dbReference>
<dbReference type="SMR" id="A1E9H9"/>
<dbReference type="GeneID" id="4525090"/>
<dbReference type="GeneID" id="67140706"/>
<dbReference type="GO" id="GO:0009535">
    <property type="term" value="C:chloroplast thylakoid membrane"/>
    <property type="evidence" value="ECO:0007669"/>
    <property type="project" value="UniProtKB-SubCell"/>
</dbReference>
<dbReference type="GO" id="GO:0009523">
    <property type="term" value="C:photosystem II"/>
    <property type="evidence" value="ECO:0007669"/>
    <property type="project" value="UniProtKB-KW"/>
</dbReference>
<dbReference type="GO" id="GO:0019684">
    <property type="term" value="P:photosynthesis, light reaction"/>
    <property type="evidence" value="ECO:0007669"/>
    <property type="project" value="InterPro"/>
</dbReference>
<dbReference type="HAMAP" id="MF_00438">
    <property type="entry name" value="PSII_PsbM"/>
    <property type="match status" value="1"/>
</dbReference>
<dbReference type="InterPro" id="IPR007826">
    <property type="entry name" value="PSII_PsbM"/>
</dbReference>
<dbReference type="InterPro" id="IPR037269">
    <property type="entry name" value="PSII_PsbM_sf"/>
</dbReference>
<dbReference type="NCBIfam" id="TIGR03038">
    <property type="entry name" value="PS_II_psbM"/>
    <property type="match status" value="1"/>
</dbReference>
<dbReference type="PANTHER" id="PTHR35774">
    <property type="entry name" value="PHOTOSYSTEM II REACTION CENTER PROTEIN M"/>
    <property type="match status" value="1"/>
</dbReference>
<dbReference type="PANTHER" id="PTHR35774:SF1">
    <property type="entry name" value="PHOTOSYSTEM II REACTION CENTER PROTEIN M"/>
    <property type="match status" value="1"/>
</dbReference>
<dbReference type="Pfam" id="PF05151">
    <property type="entry name" value="PsbM"/>
    <property type="match status" value="1"/>
</dbReference>
<dbReference type="SUPFAM" id="SSF161033">
    <property type="entry name" value="Photosystem II reaction center protein M, PsbM"/>
    <property type="match status" value="1"/>
</dbReference>
<name>PSBM_HORVU</name>
<sequence length="34" mass="3812">MEVNILAFIATALFILIPTSFLLIIYVKTVSQNN</sequence>
<protein>
    <recommendedName>
        <fullName evidence="1">Photosystem II reaction center protein M</fullName>
        <shortName evidence="1">PSII-M</shortName>
    </recommendedName>
</protein>
<proteinExistence type="evidence at protein level"/>